<gene>
    <name evidence="7" type="primary">carB</name>
    <name type="ORF">FFUJ_11803</name>
</gene>
<accession>S0EPU6</accession>
<comment type="function">
    <text evidence="3 4 6 9">Phytoene desaturase; part of the car gene cluster that mediates the biosynthesis of neurosporaxanthin, a carboxylic apocarotenoid acting as an essential protective pigments and leading to orange pigmentation (PubMed:10905351, PubMed:12172798, PubMed:19645721). Converts phytoene into lycopene via the intermediates phytofluene, zeta-carotene and neurosporene; and further desaturates gamma-carotene into torulene (PubMed:10905351, PubMed:12172798, PubMed:19645721). Neurosporaxanthin is synthesized from geranyl-geranyl pyrophosphate (GGPP) through several enzymatic activities. Phytoene synthase activity performed by the bifunctional enzyme carAR first produces phytoene from geranyl-geranyl pyrophosphate (GGPP). The phytoene dehydrogenase carB then introduces 4 desaturations to lead to lycopene which is substrate of the carotene cyclase activity of carAR that leads to the production of gamma-carotene. CarB then performs a 5th desaturation reaction to yield torulene. Torulene is the substrate of the dioxidase carT that breaks the molecule, removing five carbon atoms to yield beta-apo-4'-carotenal, whereas the aldehyde dehydrogenase carD mediates the last step by converting beta-apo-4'-carotenal into neurosporaxanthin (Probable).</text>
</comment>
<comment type="catalytic activity">
    <reaction evidence="6">
        <text>15-cis-phytoene + A = all-trans-phytofluene + AH2</text>
        <dbReference type="Rhea" id="RHEA:30603"/>
        <dbReference type="ChEBI" id="CHEBI:13193"/>
        <dbReference type="ChEBI" id="CHEBI:17499"/>
        <dbReference type="ChEBI" id="CHEBI:27787"/>
        <dbReference type="ChEBI" id="CHEBI:28129"/>
    </reaction>
    <physiologicalReaction direction="left-to-right" evidence="6">
        <dbReference type="Rhea" id="RHEA:30604"/>
    </physiologicalReaction>
</comment>
<comment type="catalytic activity">
    <reaction evidence="6">
        <text>all-trans-phytofluene + A = all-trans-zeta-carotene + AH2</text>
        <dbReference type="Rhea" id="RHEA:30607"/>
        <dbReference type="ChEBI" id="CHEBI:13193"/>
        <dbReference type="ChEBI" id="CHEBI:17499"/>
        <dbReference type="ChEBI" id="CHEBI:28068"/>
        <dbReference type="ChEBI" id="CHEBI:28129"/>
    </reaction>
    <physiologicalReaction direction="left-to-right" evidence="6">
        <dbReference type="Rhea" id="RHEA:30608"/>
    </physiologicalReaction>
</comment>
<comment type="catalytic activity">
    <reaction evidence="6">
        <text>all-trans-zeta-carotene + A = all-trans-neurosporene + AH2</text>
        <dbReference type="Rhea" id="RHEA:30611"/>
        <dbReference type="ChEBI" id="CHEBI:13193"/>
        <dbReference type="ChEBI" id="CHEBI:16833"/>
        <dbReference type="ChEBI" id="CHEBI:17499"/>
        <dbReference type="ChEBI" id="CHEBI:28068"/>
    </reaction>
    <physiologicalReaction direction="left-to-right" evidence="6">
        <dbReference type="Rhea" id="RHEA:30612"/>
    </physiologicalReaction>
</comment>
<comment type="catalytic activity">
    <reaction evidence="6">
        <text>all-trans-neurosporene + A = all-trans-lycopene + AH2</text>
        <dbReference type="Rhea" id="RHEA:30623"/>
        <dbReference type="ChEBI" id="CHEBI:13193"/>
        <dbReference type="ChEBI" id="CHEBI:15948"/>
        <dbReference type="ChEBI" id="CHEBI:16833"/>
        <dbReference type="ChEBI" id="CHEBI:17499"/>
    </reaction>
    <physiologicalReaction direction="left-to-right" evidence="6">
        <dbReference type="Rhea" id="RHEA:30624"/>
    </physiologicalReaction>
</comment>
<comment type="cofactor">
    <cofactor evidence="1">
        <name>NAD(+)</name>
        <dbReference type="ChEBI" id="CHEBI:57540"/>
    </cofactor>
</comment>
<comment type="pathway">
    <text evidence="4">Carotenoid biosynthesis.</text>
</comment>
<comment type="subcellular location">
    <subcellularLocation>
        <location evidence="2">Membrane</location>
        <topology evidence="2">Single-pass membrane protein</topology>
    </subcellularLocation>
</comment>
<comment type="induction">
    <text evidence="4 5">The expression is subject to photoinduction (PubMed:12172798, PubMed:15133714). Expression is slightly induced after 2 hours of incubation at 42 degrees Celsius (PubMed:15133714).</text>
</comment>
<comment type="disruption phenotype">
    <text evidence="4">Leads to the lack of coloured carotenoids and the accumulation of phytoene.</text>
</comment>
<comment type="similarity">
    <text evidence="8">Belongs to the carotenoid/retinoid oxidoreductase family.</text>
</comment>
<proteinExistence type="evidence at protein level"/>
<organism>
    <name type="scientific">Gibberella fujikuroi (strain CBS 195.34 / IMI 58289 / NRRL A-6831)</name>
    <name type="common">Bakanae and foot rot disease fungus</name>
    <name type="synonym">Fusarium fujikuroi</name>
    <dbReference type="NCBI Taxonomy" id="1279085"/>
    <lineage>
        <taxon>Eukaryota</taxon>
        <taxon>Fungi</taxon>
        <taxon>Dikarya</taxon>
        <taxon>Ascomycota</taxon>
        <taxon>Pezizomycotina</taxon>
        <taxon>Sordariomycetes</taxon>
        <taxon>Hypocreomycetidae</taxon>
        <taxon>Hypocreales</taxon>
        <taxon>Nectriaceae</taxon>
        <taxon>Fusarium</taxon>
        <taxon>Fusarium fujikuroi species complex</taxon>
    </lineage>
</organism>
<keyword id="KW-0125">Carotenoid biosynthesis</keyword>
<keyword id="KW-0472">Membrane</keyword>
<keyword id="KW-0560">Oxidoreductase</keyword>
<keyword id="KW-1185">Reference proteome</keyword>
<keyword id="KW-0812">Transmembrane</keyword>
<keyword id="KW-1133">Transmembrane helix</keyword>
<feature type="chain" id="PRO_0000456841" description="Phytoene desaturase">
    <location>
        <begin position="1"/>
        <end position="570"/>
    </location>
</feature>
<feature type="transmembrane region" description="Helical" evidence="2">
    <location>
        <begin position="547"/>
        <end position="567"/>
    </location>
</feature>
<feature type="mutagenesis site" description="Reduces the ability to catalyze the fifth desaturation step." evidence="6">
    <original>P</original>
    <variation>L</variation>
    <location>
        <position position="170"/>
    </location>
</feature>
<sequence length="570" mass="62701">MSDIKKSVIVIGAGVGGVSTAARLAKAGFKVTILEKNDFTGGRCSLIHNDGHRFDQGPSLLLLPRFFHEIFQDLGTSLTAEGVELLKCEPNYNIWFGDGSSFEMSTDLTKMKKAIEAVEGIDGFERYLGFLQESHRHYEVSVESVLRRNFPSILSLARPEVLFNLFNIHPLESIWTRASKYFWTERLRRVFTFGSMYMGMSPFDAPGTYSLLQYTELAEGILYPRGGFHKVVEALVNVGQRLGVEYRLSTGVKSISIDQATGKANGVVLSDGTHLPSDIVISNADLVYTYNNLLPKTSYADSLSKRETSCSSISFYWSASKIVPELNAHNIFLADEYQESFDSIFKEHLIPSEPSFYVNVPSRIDPSAAPEGKDSIVVLVPVGHLLSDSEGTHRGLSKSGNSGGLETSQDWDKMISLARDTVIATMRARIGVDLAPLIENEIINTPFTWQEKFNLDKGAILGLSHSIMNVLAFRPGTQHSKYKNLYFAGASTHPGTGVPVCIAGSKIVAEQILKDSGFKNNQIPWAQDTTKSPKGGLDKMSDSSLTLFQGFLGALVAILLAYYYLVIAAN</sequence>
<evidence type="ECO:0000250" key="1">
    <source>
        <dbReference type="UniProtKB" id="P21334"/>
    </source>
</evidence>
<evidence type="ECO:0000255" key="2"/>
<evidence type="ECO:0000269" key="3">
    <source>
    </source>
</evidence>
<evidence type="ECO:0000269" key="4">
    <source>
    </source>
</evidence>
<evidence type="ECO:0000269" key="5">
    <source>
    </source>
</evidence>
<evidence type="ECO:0000269" key="6">
    <source>
    </source>
</evidence>
<evidence type="ECO:0000303" key="7">
    <source>
    </source>
</evidence>
<evidence type="ECO:0000305" key="8"/>
<evidence type="ECO:0000305" key="9">
    <source>
    </source>
</evidence>
<name>CARB_GIBF5</name>
<protein>
    <recommendedName>
        <fullName evidence="7">Phytoene desaturase</fullName>
        <ecNumber evidence="4">1.3.99.-</ecNumber>
    </recommendedName>
    <alternativeName>
        <fullName evidence="7">Carotenoid biosynthesis cluster protein B</fullName>
    </alternativeName>
    <alternativeName>
        <fullName evidence="7">Phytoene desaturase (3,4-didehydrolycopene-forming)</fullName>
    </alternativeName>
</protein>
<reference key="1">
    <citation type="journal article" date="2013" name="PLoS Pathog.">
        <title>Deciphering the cryptic genome: genome-wide analyses of the rice pathogen Fusarium fujikuroi reveal complex regulation of secondary metabolism and novel metabolites.</title>
        <authorList>
            <person name="Wiemann P."/>
            <person name="Sieber C.M.K."/>
            <person name="von Bargen K.W."/>
            <person name="Studt L."/>
            <person name="Niehaus E.-M."/>
            <person name="Espino J.J."/>
            <person name="Huss K."/>
            <person name="Michielse C.B."/>
            <person name="Albermann S."/>
            <person name="Wagner D."/>
            <person name="Bergner S.V."/>
            <person name="Connolly L.R."/>
            <person name="Fischer A."/>
            <person name="Reuter G."/>
            <person name="Kleigrewe K."/>
            <person name="Bald T."/>
            <person name="Wingfield B.D."/>
            <person name="Ophir R."/>
            <person name="Freeman S."/>
            <person name="Hippler M."/>
            <person name="Smith K.M."/>
            <person name="Brown D.W."/>
            <person name="Proctor R.H."/>
            <person name="Muensterkoetter M."/>
            <person name="Freitag M."/>
            <person name="Humpf H.-U."/>
            <person name="Gueldener U."/>
            <person name="Tudzynski B."/>
        </authorList>
    </citation>
    <scope>NUCLEOTIDE SEQUENCE [LARGE SCALE GENOMIC DNA]</scope>
    <source>
        <strain>CBS 195.34 / IMI 58289 / NRRL A-6831</strain>
    </source>
</reference>
<reference key="2">
    <citation type="journal article" date="2000" name="Mol. Gen. Genet.">
        <title>Homologous recombination and allele replacement in transformants of Fusarium fujikuroi.</title>
        <authorList>
            <person name="Fernandez-Martin R."/>
            <person name="Cerda-Olmedo E."/>
            <person name="Avalos J."/>
        </authorList>
    </citation>
    <scope>FUNCTION</scope>
</reference>
<reference key="3">
    <citation type="journal article" date="2002" name="Mol. Genet. Genomics">
        <title>A carotenoid biosynthesis gene cluster in Fusarium fujikuroi: the genes carB and carRA.</title>
        <authorList>
            <person name="Linnemannstons P."/>
            <person name="Prado M.M."/>
            <person name="Fernandez-Martin R."/>
            <person name="Tudzynski B."/>
            <person name="Avalos J."/>
        </authorList>
    </citation>
    <scope>FUNCTION</scope>
    <scope>DISRUPTION PHENOTYPE</scope>
    <scope>INDUCTION</scope>
</reference>
<reference key="4">
    <citation type="journal article" date="2004" name="Curr. Genet.">
        <title>A gene of the opsin family in the carotenoid gene cluster of Fusarium fujikuroi.</title>
        <authorList>
            <person name="Prado M.M."/>
            <person name="Prado-Cabrero A."/>
            <person name="Fernandez-Martin R."/>
            <person name="Avalos J."/>
        </authorList>
    </citation>
    <scope>INDUCTION</scope>
</reference>
<reference key="5">
    <citation type="journal article" date="2009" name="FEBS J.">
        <title>Deviation of the neurosporaxanthin pathway towards beta-carotene biosynthesis in Fusarium fujikuroi by a point mutation in the phytoene desaturase gene.</title>
        <authorList>
            <person name="Prado-Cabrero A."/>
            <person name="Schaub P."/>
            <person name="Diaz-Sanchez V."/>
            <person name="Estrada A.F."/>
            <person name="Al-Babili S."/>
            <person name="Avalos J."/>
        </authorList>
    </citation>
    <scope>FUNCTION</scope>
    <scope>CATALYTIC ACTIVITY</scope>
    <scope>MUTAGENESIS OF PRO-170</scope>
</reference>
<dbReference type="EC" id="1.3.99.-" evidence="4"/>
<dbReference type="EMBL" id="HF679033">
    <property type="protein sequence ID" value="CCT75765.1"/>
    <property type="molecule type" value="Genomic_DNA"/>
</dbReference>
<dbReference type="SMR" id="S0EPU6"/>
<dbReference type="STRING" id="1279085.S0EPU6"/>
<dbReference type="VEuPathDB" id="FungiDB:FFUJ_11803"/>
<dbReference type="Proteomes" id="UP000016800">
    <property type="component" value="Chromosome 11"/>
</dbReference>
<dbReference type="GO" id="GO:0016020">
    <property type="term" value="C:membrane"/>
    <property type="evidence" value="ECO:0007669"/>
    <property type="project" value="UniProtKB-SubCell"/>
</dbReference>
<dbReference type="GO" id="GO:0016627">
    <property type="term" value="F:oxidoreductase activity, acting on the CH-CH group of donors"/>
    <property type="evidence" value="ECO:0007669"/>
    <property type="project" value="UniProtKB-ARBA"/>
</dbReference>
<dbReference type="GO" id="GO:0016117">
    <property type="term" value="P:carotenoid biosynthetic process"/>
    <property type="evidence" value="ECO:0007669"/>
    <property type="project" value="UniProtKB-KW"/>
</dbReference>
<dbReference type="FunFam" id="3.50.50.60:FF:000171">
    <property type="entry name" value="zeta-carotene-forming phytoene desaturase"/>
    <property type="match status" value="1"/>
</dbReference>
<dbReference type="Gene3D" id="3.50.50.60">
    <property type="entry name" value="FAD/NAD(P)-binding domain"/>
    <property type="match status" value="2"/>
</dbReference>
<dbReference type="InterPro" id="IPR002937">
    <property type="entry name" value="Amino_oxidase"/>
</dbReference>
<dbReference type="InterPro" id="IPR014105">
    <property type="entry name" value="Carotenoid/retinoid_OxRdtase"/>
</dbReference>
<dbReference type="InterPro" id="IPR036188">
    <property type="entry name" value="FAD/NAD-bd_sf"/>
</dbReference>
<dbReference type="InterPro" id="IPR008150">
    <property type="entry name" value="Phytoene_DH_bac_CS"/>
</dbReference>
<dbReference type="NCBIfam" id="TIGR02734">
    <property type="entry name" value="crtI_fam"/>
    <property type="match status" value="1"/>
</dbReference>
<dbReference type="PANTHER" id="PTHR43734">
    <property type="entry name" value="PHYTOENE DESATURASE"/>
    <property type="match status" value="1"/>
</dbReference>
<dbReference type="PANTHER" id="PTHR43734:SF1">
    <property type="entry name" value="PHYTOENE DESATURASE"/>
    <property type="match status" value="1"/>
</dbReference>
<dbReference type="Pfam" id="PF01593">
    <property type="entry name" value="Amino_oxidase"/>
    <property type="match status" value="1"/>
</dbReference>
<dbReference type="SUPFAM" id="SSF51905">
    <property type="entry name" value="FAD/NAD(P)-binding domain"/>
    <property type="match status" value="1"/>
</dbReference>
<dbReference type="PROSITE" id="PS00982">
    <property type="entry name" value="PHYTOENE_DH"/>
    <property type="match status" value="1"/>
</dbReference>